<evidence type="ECO:0000255" key="1"/>
<evidence type="ECO:0000269" key="2">
    <source>
    </source>
</evidence>
<evidence type="ECO:0000303" key="3">
    <source>
    </source>
</evidence>
<evidence type="ECO:0000305" key="4"/>
<evidence type="ECO:0000305" key="5">
    <source>
    </source>
</evidence>
<evidence type="ECO:0000312" key="6">
    <source>
        <dbReference type="EMBL" id="AEP22448.1"/>
    </source>
</evidence>
<evidence type="ECO:0000312" key="7">
    <source>
        <dbReference type="EMBL" id="EFA05855.1"/>
    </source>
</evidence>
<evidence type="ECO:0000312" key="8">
    <source>
        <dbReference type="Proteomes" id="UP000007266"/>
    </source>
</evidence>
<proteinExistence type="evidence at protein level"/>
<feature type="signal peptide" evidence="1">
    <location>
        <begin position="1"/>
        <end position="23"/>
    </location>
</feature>
<feature type="propeptide" id="PRO_0000439152" evidence="4">
    <location>
        <begin position="26"/>
        <end position="29"/>
    </location>
</feature>
<feature type="peptide" id="PRO_0000439153" description="RYamide-1" evidence="5">
    <location>
        <begin position="32"/>
        <end position="44"/>
    </location>
</feature>
<feature type="propeptide" id="PRO_0000439154" evidence="4">
    <location>
        <begin position="47"/>
        <end position="63"/>
    </location>
</feature>
<feature type="peptide" id="PRO_0000439155" description="RYamide-2" evidence="5">
    <location>
        <begin position="64"/>
        <end position="73"/>
    </location>
</feature>
<feature type="propeptide" id="PRO_0000439156" evidence="4">
    <location>
        <begin position="77"/>
        <end position="128"/>
    </location>
</feature>
<feature type="modified residue" description="Tyrosine amide" evidence="5">
    <location>
        <position position="44"/>
    </location>
</feature>
<feature type="modified residue" description="Tyrosine amide" evidence="5">
    <location>
        <position position="73"/>
    </location>
</feature>
<comment type="function">
    <text evidence="2">Neuropeptides RYamide-1 and RYamide-2 are ligands for the G-protein coupled receptor RYa-R. RYamide-2 is the most potent activator of RYa-R.</text>
</comment>
<comment type="subcellular location">
    <subcellularLocation>
        <location evidence="5">Secreted</location>
    </subcellularLocation>
</comment>
<keyword id="KW-0027">Amidation</keyword>
<keyword id="KW-0165">Cleavage on pair of basic residues</keyword>
<keyword id="KW-0527">Neuropeptide</keyword>
<keyword id="KW-1185">Reference proteome</keyword>
<keyword id="KW-0964">Secreted</keyword>
<keyword id="KW-0732">Signal</keyword>
<sequence>MHARKLIVVLVYILTVLVSVAVSKRYTSEKRVQNLATFKTMMRYGRGGPSPNNKENKVNIRPRADAFFLGPRYGKRSGWSPNASLVYPVSTPLCGLDEDLSCAYTGISDLYRCTPRKGESEEFTTSSN</sequence>
<reference evidence="6" key="1">
    <citation type="journal article" date="2011" name="Biochem. Biophys. Res. Commun.">
        <title>Identification of the Drosophila and Tribolium receptors for the recently discovered insect RYamide neuropeptides.</title>
        <authorList>
            <person name="Collin C."/>
            <person name="Hauser F."/>
            <person name="Krogh-Meyer P."/>
            <person name="Hansen K.K."/>
            <person name="Gonzalez de Valdivia E."/>
            <person name="Williamson M."/>
            <person name="Grimmelikhuijzen C.J."/>
        </authorList>
    </citation>
    <scope>NUCLEOTIDE SEQUENCE [MRNA]</scope>
    <scope>SYNTHESIS OF RYAMIDE-1 AND RYAMIDE-2</scope>
    <scope>FUNCTION</scope>
    <scope>SUBCELLULAR LOCATION</scope>
    <scope>AMIDATION AT TYR-44 AND TYR-73</scope>
</reference>
<reference evidence="8" key="2">
    <citation type="journal article" date="2008" name="Nature">
        <title>The genome of the model beetle and pest Tribolium castaneum.</title>
        <authorList>
            <consortium name="Tribolium Genome Sequencing Consortium"/>
            <person name="Richards S."/>
            <person name="Gibbs R.A."/>
            <person name="Weinstock G.M."/>
            <person name="Brown S.J."/>
            <person name="Denell R."/>
            <person name="Beeman R.W."/>
            <person name="Gibbs R."/>
            <person name="Beeman R.W."/>
            <person name="Brown S.J."/>
            <person name="Bucher G."/>
            <person name="Friedrich M."/>
            <person name="Grimmelikhuijzen C.J."/>
            <person name="Klingler M."/>
            <person name="Lorenzen M."/>
            <person name="Richards S."/>
            <person name="Roth S."/>
            <person name="Schroder R."/>
            <person name="Tautz D."/>
            <person name="Zdobnov E.M."/>
            <person name="Muzny D."/>
            <person name="Gibbs R.A."/>
            <person name="Weinstock G.M."/>
            <person name="Attaway T."/>
            <person name="Bell S."/>
            <person name="Buhay C.J."/>
            <person name="Chandrabose M.N."/>
            <person name="Chavez D."/>
            <person name="Clerk-Blankenburg K.P."/>
            <person name="Cree A."/>
            <person name="Dao M."/>
            <person name="Davis C."/>
            <person name="Chacko J."/>
            <person name="Dinh H."/>
            <person name="Dugan-Rocha S."/>
            <person name="Fowler G."/>
            <person name="Garner T.T."/>
            <person name="Garnes J."/>
            <person name="Gnirke A."/>
            <person name="Hawes A."/>
            <person name="Hernandez J."/>
            <person name="Hines S."/>
            <person name="Holder M."/>
            <person name="Hume J."/>
            <person name="Jhangiani S.N."/>
            <person name="Joshi V."/>
            <person name="Khan Z.M."/>
            <person name="Jackson L."/>
            <person name="Kovar C."/>
            <person name="Kowis A."/>
            <person name="Lee S."/>
            <person name="Lewis L.R."/>
            <person name="Margolis J."/>
            <person name="Morgan M."/>
            <person name="Nazareth L.V."/>
            <person name="Nguyen N."/>
            <person name="Okwuonu G."/>
            <person name="Parker D."/>
            <person name="Richards S."/>
            <person name="Ruiz S.J."/>
            <person name="Santibanez J."/>
            <person name="Savard J."/>
            <person name="Scherer S.E."/>
            <person name="Schneider B."/>
            <person name="Sodergren E."/>
            <person name="Tautz D."/>
            <person name="Vattahil S."/>
            <person name="Villasana D."/>
            <person name="White C.S."/>
            <person name="Wright R."/>
            <person name="Park Y."/>
            <person name="Beeman R.W."/>
            <person name="Lord J."/>
            <person name="Oppert B."/>
            <person name="Lorenzen M."/>
            <person name="Brown S."/>
            <person name="Wang L."/>
            <person name="Savard J."/>
            <person name="Tautz D."/>
            <person name="Richards S."/>
            <person name="Weinstock G."/>
            <person name="Gibbs R.A."/>
            <person name="Liu Y."/>
            <person name="Worley K."/>
            <person name="Weinstock G."/>
            <person name="Elsik C.G."/>
            <person name="Reese J.T."/>
            <person name="Elhaik E."/>
            <person name="Landan G."/>
            <person name="Graur D."/>
            <person name="Arensburger P."/>
            <person name="Atkinson P."/>
            <person name="Beeman R.W."/>
            <person name="Beidler J."/>
            <person name="Brown S.J."/>
            <person name="Demuth J.P."/>
            <person name="Drury D.W."/>
            <person name="Du Y.Z."/>
            <person name="Fujiwara H."/>
            <person name="Lorenzen M."/>
            <person name="Maselli V."/>
            <person name="Osanai M."/>
            <person name="Park Y."/>
            <person name="Robertson H.M."/>
            <person name="Tu Z."/>
            <person name="Wang J.J."/>
            <person name="Wang S."/>
            <person name="Richards S."/>
            <person name="Song H."/>
            <person name="Zhang L."/>
            <person name="Sodergren E."/>
            <person name="Werner D."/>
            <person name="Stanke M."/>
            <person name="Morgenstern B."/>
            <person name="Solovyev V."/>
            <person name="Kosarev P."/>
            <person name="Brown G."/>
            <person name="Chen H.C."/>
            <person name="Ermolaeva O."/>
            <person name="Hlavina W."/>
            <person name="Kapustin Y."/>
            <person name="Kiryutin B."/>
            <person name="Kitts P."/>
            <person name="Maglott D."/>
            <person name="Pruitt K."/>
            <person name="Sapojnikov V."/>
            <person name="Souvorov A."/>
            <person name="Mackey A.J."/>
            <person name="Waterhouse R.M."/>
            <person name="Wyder S."/>
            <person name="Zdobnov E.M."/>
            <person name="Zdobnov E.M."/>
            <person name="Wyder S."/>
            <person name="Kriventseva E.V."/>
            <person name="Kadowaki T."/>
            <person name="Bork P."/>
            <person name="Aranda M."/>
            <person name="Bao R."/>
            <person name="Beermann A."/>
            <person name="Berns N."/>
            <person name="Bolognesi R."/>
            <person name="Bonneton F."/>
            <person name="Bopp D."/>
            <person name="Brown S.J."/>
            <person name="Bucher G."/>
            <person name="Butts T."/>
            <person name="Chaumot A."/>
            <person name="Denell R.E."/>
            <person name="Ferrier D.E."/>
            <person name="Friedrich M."/>
            <person name="Gordon C.M."/>
            <person name="Jindra M."/>
            <person name="Klingler M."/>
            <person name="Lan Q."/>
            <person name="Lattorff H.M."/>
            <person name="Laudet V."/>
            <person name="von Levetsow C."/>
            <person name="Liu Z."/>
            <person name="Lutz R."/>
            <person name="Lynch J.A."/>
            <person name="da Fonseca R.N."/>
            <person name="Posnien N."/>
            <person name="Reuter R."/>
            <person name="Roth S."/>
            <person name="Savard J."/>
            <person name="Schinko J.B."/>
            <person name="Schmitt C."/>
            <person name="Schoppmeier M."/>
            <person name="Schroder R."/>
            <person name="Shippy T.D."/>
            <person name="Simonnet F."/>
            <person name="Marques-Souza H."/>
            <person name="Tautz D."/>
            <person name="Tomoyasu Y."/>
            <person name="Trauner J."/>
            <person name="Van der Zee M."/>
            <person name="Vervoort M."/>
            <person name="Wittkopp N."/>
            <person name="Wimmer E.A."/>
            <person name="Yang X."/>
            <person name="Jones A.K."/>
            <person name="Sattelle D.B."/>
            <person name="Ebert P.R."/>
            <person name="Nelson D."/>
            <person name="Scott J.G."/>
            <person name="Beeman R.W."/>
            <person name="Muthukrishnan S."/>
            <person name="Kramer K.J."/>
            <person name="Arakane Y."/>
            <person name="Beeman R.W."/>
            <person name="Zhu Q."/>
            <person name="Hogenkamp D."/>
            <person name="Dixit R."/>
            <person name="Oppert B."/>
            <person name="Jiang H."/>
            <person name="Zou Z."/>
            <person name="Marshall J."/>
            <person name="Elpidina E."/>
            <person name="Vinokurov K."/>
            <person name="Oppert C."/>
            <person name="Zou Z."/>
            <person name="Evans J."/>
            <person name="Lu Z."/>
            <person name="Zhao P."/>
            <person name="Sumathipala N."/>
            <person name="Altincicek B."/>
            <person name="Vilcinskas A."/>
            <person name="Williams M."/>
            <person name="Hultmark D."/>
            <person name="Hetru C."/>
            <person name="Jiang H."/>
            <person name="Grimmelikhuijzen C.J."/>
            <person name="Hauser F."/>
            <person name="Cazzamali G."/>
            <person name="Williamson M."/>
            <person name="Park Y."/>
            <person name="Li B."/>
            <person name="Tanaka Y."/>
            <person name="Predel R."/>
            <person name="Neupert S."/>
            <person name="Schachtner J."/>
            <person name="Verleyen P."/>
            <person name="Raible F."/>
            <person name="Bork P."/>
            <person name="Friedrich M."/>
            <person name="Walden K.K."/>
            <person name="Robertson H.M."/>
            <person name="Angeli S."/>
            <person name="Foret S."/>
            <person name="Bucher G."/>
            <person name="Schuetz S."/>
            <person name="Maleszka R."/>
            <person name="Wimmer E.A."/>
            <person name="Beeman R.W."/>
            <person name="Lorenzen M."/>
            <person name="Tomoyasu Y."/>
            <person name="Miller S.C."/>
            <person name="Grossmann D."/>
            <person name="Bucher G."/>
        </authorList>
    </citation>
    <scope>NUCLEOTIDE SEQUENCE [LARGE SCALE GENOMIC DNA]</scope>
    <source>
        <strain evidence="8">Georgia GA2</strain>
    </source>
</reference>
<reference evidence="8" key="3">
    <citation type="journal article" date="2010" name="Nucleic Acids Res.">
        <title>BeetleBase in 2010: revisions to provide comprehensive genomic information for Tribolium castaneum.</title>
        <authorList>
            <person name="Kim H.S."/>
            <person name="Murphy T."/>
            <person name="Xia J."/>
            <person name="Caragea D."/>
            <person name="Park Y."/>
            <person name="Beeman R.W."/>
            <person name="Lorenzen M.D."/>
            <person name="Butcher S."/>
            <person name="Manak J.R."/>
            <person name="Brown S.J."/>
        </authorList>
    </citation>
    <scope>GENOME REANNOTATION</scope>
    <source>
        <strain evidence="8">Georgia GA2</strain>
    </source>
</reference>
<protein>
    <recommendedName>
        <fullName evidence="3">RYamide neuropeptides</fullName>
    </recommendedName>
    <component>
        <recommendedName>
            <fullName evidence="3">RYamide-1</fullName>
        </recommendedName>
    </component>
    <component>
        <recommendedName>
            <fullName evidence="3">RYamide-2</fullName>
        </recommendedName>
    </component>
</protein>
<dbReference type="EMBL" id="JN200817">
    <property type="protein sequence ID" value="AEP22448.1"/>
    <property type="molecule type" value="mRNA"/>
</dbReference>
<dbReference type="EMBL" id="KQ971354">
    <property type="protein sequence ID" value="EFA05855.1"/>
    <property type="molecule type" value="Genomic_DNA"/>
</dbReference>
<dbReference type="RefSeq" id="NP_001280530.1">
    <property type="nucleotide sequence ID" value="NM_001293601.1"/>
</dbReference>
<dbReference type="SMR" id="D6WT67"/>
<dbReference type="STRING" id="7070.D6WT67"/>
<dbReference type="EnsemblMetazoa" id="TC008650_001">
    <property type="protein sequence ID" value="TC008650_001"/>
    <property type="gene ID" value="TC008650"/>
</dbReference>
<dbReference type="GeneID" id="100750223"/>
<dbReference type="KEGG" id="tca:100750223"/>
<dbReference type="eggNOG" id="ENOG502SGHQ">
    <property type="taxonomic scope" value="Eukaryota"/>
</dbReference>
<dbReference type="HOGENOM" id="CLU_1817660_0_0_1"/>
<dbReference type="InParanoid" id="D6WT67"/>
<dbReference type="OrthoDB" id="6350276at2759"/>
<dbReference type="PhylomeDB" id="D6WT67"/>
<dbReference type="Proteomes" id="UP000007266">
    <property type="component" value="Linkage group 7"/>
</dbReference>
<dbReference type="GO" id="GO:0005576">
    <property type="term" value="C:extracellular region"/>
    <property type="evidence" value="ECO:0007669"/>
    <property type="project" value="UniProtKB-SubCell"/>
</dbReference>
<dbReference type="GO" id="GO:0007218">
    <property type="term" value="P:neuropeptide signaling pathway"/>
    <property type="evidence" value="ECO:0007669"/>
    <property type="project" value="UniProtKB-KW"/>
</dbReference>
<accession>D6WT67</accession>
<organism evidence="8">
    <name type="scientific">Tribolium castaneum</name>
    <name type="common">Red flour beetle</name>
    <dbReference type="NCBI Taxonomy" id="7070"/>
    <lineage>
        <taxon>Eukaryota</taxon>
        <taxon>Metazoa</taxon>
        <taxon>Ecdysozoa</taxon>
        <taxon>Arthropoda</taxon>
        <taxon>Hexapoda</taxon>
        <taxon>Insecta</taxon>
        <taxon>Pterygota</taxon>
        <taxon>Neoptera</taxon>
        <taxon>Endopterygota</taxon>
        <taxon>Coleoptera</taxon>
        <taxon>Polyphaga</taxon>
        <taxon>Cucujiformia</taxon>
        <taxon>Tenebrionidae</taxon>
        <taxon>Tenebrionidae incertae sedis</taxon>
        <taxon>Tribolium</taxon>
    </lineage>
</organism>
<name>RYA_TRICA</name>
<gene>
    <name evidence="3" type="primary">RYa</name>
    <name evidence="7" type="ORF">TC008650</name>
</gene>